<reference key="1">
    <citation type="submission" date="2007-07" db="EMBL/GenBank/DDBJ databases">
        <title>Complete sequence of Fervidobacterium nodosum Rt17-B1.</title>
        <authorList>
            <consortium name="US DOE Joint Genome Institute"/>
            <person name="Copeland A."/>
            <person name="Lucas S."/>
            <person name="Lapidus A."/>
            <person name="Barry K."/>
            <person name="Glavina del Rio T."/>
            <person name="Dalin E."/>
            <person name="Tice H."/>
            <person name="Pitluck S."/>
            <person name="Saunders E."/>
            <person name="Brettin T."/>
            <person name="Bruce D."/>
            <person name="Detter J.C."/>
            <person name="Han C."/>
            <person name="Schmutz J."/>
            <person name="Larimer F."/>
            <person name="Land M."/>
            <person name="Hauser L."/>
            <person name="Kyrpides N."/>
            <person name="Mikhailova N."/>
            <person name="Nelson K."/>
            <person name="Gogarten J.P."/>
            <person name="Noll K."/>
            <person name="Richardson P."/>
        </authorList>
    </citation>
    <scope>NUCLEOTIDE SEQUENCE [LARGE SCALE GENOMIC DNA]</scope>
    <source>
        <strain>ATCC 35602 / DSM 5306 / Rt17-B1</strain>
    </source>
</reference>
<evidence type="ECO:0000255" key="1">
    <source>
        <dbReference type="HAMAP-Rule" id="MF_00379"/>
    </source>
</evidence>
<comment type="function">
    <text evidence="1">Exhibits a very high intrinsic GTPase hydrolysis rate. Involved in the addition of a carboxymethylaminomethyl (cmnm) group at the wobble position (U34) of certain tRNAs, forming tRNA-cmnm(5)s(2)U34.</text>
</comment>
<comment type="cofactor">
    <cofactor evidence="1">
        <name>K(+)</name>
        <dbReference type="ChEBI" id="CHEBI:29103"/>
    </cofactor>
    <text evidence="1">Binds 1 potassium ion per subunit.</text>
</comment>
<comment type="subunit">
    <text evidence="1">Homodimer. Heterotetramer of two MnmE and two MnmG subunits.</text>
</comment>
<comment type="subcellular location">
    <subcellularLocation>
        <location evidence="1">Cytoplasm</location>
    </subcellularLocation>
</comment>
<comment type="similarity">
    <text evidence="1">Belongs to the TRAFAC class TrmE-Era-EngA-EngB-Septin-like GTPase superfamily. TrmE GTPase family.</text>
</comment>
<accession>A7HK07</accession>
<protein>
    <recommendedName>
        <fullName evidence="1">tRNA modification GTPase MnmE</fullName>
        <ecNumber evidence="1">3.6.-.-</ecNumber>
    </recommendedName>
</protein>
<organism>
    <name type="scientific">Fervidobacterium nodosum (strain ATCC 35602 / DSM 5306 / Rt17-B1)</name>
    <dbReference type="NCBI Taxonomy" id="381764"/>
    <lineage>
        <taxon>Bacteria</taxon>
        <taxon>Thermotogati</taxon>
        <taxon>Thermotogota</taxon>
        <taxon>Thermotogae</taxon>
        <taxon>Thermotogales</taxon>
        <taxon>Fervidobacteriaceae</taxon>
        <taxon>Fervidobacterium</taxon>
    </lineage>
</organism>
<name>MNME_FERNB</name>
<dbReference type="EC" id="3.6.-.-" evidence="1"/>
<dbReference type="EMBL" id="CP000771">
    <property type="protein sequence ID" value="ABS60240.1"/>
    <property type="molecule type" value="Genomic_DNA"/>
</dbReference>
<dbReference type="RefSeq" id="WP_011993560.1">
    <property type="nucleotide sequence ID" value="NC_009718.1"/>
</dbReference>
<dbReference type="SMR" id="A7HK07"/>
<dbReference type="STRING" id="381764.Fnod_0375"/>
<dbReference type="KEGG" id="fno:Fnod_0375"/>
<dbReference type="eggNOG" id="COG0486">
    <property type="taxonomic scope" value="Bacteria"/>
</dbReference>
<dbReference type="HOGENOM" id="CLU_019624_4_1_0"/>
<dbReference type="OrthoDB" id="9805918at2"/>
<dbReference type="Proteomes" id="UP000002415">
    <property type="component" value="Chromosome"/>
</dbReference>
<dbReference type="GO" id="GO:0005829">
    <property type="term" value="C:cytosol"/>
    <property type="evidence" value="ECO:0007669"/>
    <property type="project" value="TreeGrafter"/>
</dbReference>
<dbReference type="GO" id="GO:0005525">
    <property type="term" value="F:GTP binding"/>
    <property type="evidence" value="ECO:0007669"/>
    <property type="project" value="UniProtKB-UniRule"/>
</dbReference>
<dbReference type="GO" id="GO:0003924">
    <property type="term" value="F:GTPase activity"/>
    <property type="evidence" value="ECO:0007669"/>
    <property type="project" value="UniProtKB-UniRule"/>
</dbReference>
<dbReference type="GO" id="GO:0046872">
    <property type="term" value="F:metal ion binding"/>
    <property type="evidence" value="ECO:0007669"/>
    <property type="project" value="UniProtKB-KW"/>
</dbReference>
<dbReference type="GO" id="GO:0030488">
    <property type="term" value="P:tRNA methylation"/>
    <property type="evidence" value="ECO:0007669"/>
    <property type="project" value="TreeGrafter"/>
</dbReference>
<dbReference type="GO" id="GO:0002098">
    <property type="term" value="P:tRNA wobble uridine modification"/>
    <property type="evidence" value="ECO:0007669"/>
    <property type="project" value="TreeGrafter"/>
</dbReference>
<dbReference type="CDD" id="cd04164">
    <property type="entry name" value="trmE"/>
    <property type="match status" value="1"/>
</dbReference>
<dbReference type="CDD" id="cd14858">
    <property type="entry name" value="TrmE_N"/>
    <property type="match status" value="1"/>
</dbReference>
<dbReference type="FunFam" id="3.30.1360.120:FF:000003">
    <property type="entry name" value="tRNA modification GTPase MnmE"/>
    <property type="match status" value="1"/>
</dbReference>
<dbReference type="FunFam" id="3.40.50.300:FF:001376">
    <property type="entry name" value="tRNA modification GTPase MnmE"/>
    <property type="match status" value="1"/>
</dbReference>
<dbReference type="Gene3D" id="3.40.50.300">
    <property type="entry name" value="P-loop containing nucleotide triphosphate hydrolases"/>
    <property type="match status" value="1"/>
</dbReference>
<dbReference type="Gene3D" id="3.30.1360.120">
    <property type="entry name" value="Probable tRNA modification gtpase trme, domain 1"/>
    <property type="match status" value="1"/>
</dbReference>
<dbReference type="Gene3D" id="1.20.120.430">
    <property type="entry name" value="tRNA modification GTPase MnmE domain 2"/>
    <property type="match status" value="1"/>
</dbReference>
<dbReference type="HAMAP" id="MF_00379">
    <property type="entry name" value="GTPase_MnmE"/>
    <property type="match status" value="1"/>
</dbReference>
<dbReference type="InterPro" id="IPR031168">
    <property type="entry name" value="G_TrmE"/>
</dbReference>
<dbReference type="InterPro" id="IPR006073">
    <property type="entry name" value="GTP-bd"/>
</dbReference>
<dbReference type="InterPro" id="IPR018948">
    <property type="entry name" value="GTP-bd_TrmE_N"/>
</dbReference>
<dbReference type="InterPro" id="IPR004520">
    <property type="entry name" value="GTPase_MnmE"/>
</dbReference>
<dbReference type="InterPro" id="IPR027368">
    <property type="entry name" value="MnmE_dom2"/>
</dbReference>
<dbReference type="InterPro" id="IPR025867">
    <property type="entry name" value="MnmE_helical"/>
</dbReference>
<dbReference type="InterPro" id="IPR027417">
    <property type="entry name" value="P-loop_NTPase"/>
</dbReference>
<dbReference type="InterPro" id="IPR005225">
    <property type="entry name" value="Small_GTP-bd"/>
</dbReference>
<dbReference type="InterPro" id="IPR027266">
    <property type="entry name" value="TrmE/GcvT_dom1"/>
</dbReference>
<dbReference type="NCBIfam" id="TIGR00450">
    <property type="entry name" value="mnmE_trmE_thdF"/>
    <property type="match status" value="1"/>
</dbReference>
<dbReference type="NCBIfam" id="NF003661">
    <property type="entry name" value="PRK05291.1-3"/>
    <property type="match status" value="1"/>
</dbReference>
<dbReference type="NCBIfam" id="TIGR00231">
    <property type="entry name" value="small_GTP"/>
    <property type="match status" value="1"/>
</dbReference>
<dbReference type="PANTHER" id="PTHR42714">
    <property type="entry name" value="TRNA MODIFICATION GTPASE GTPBP3"/>
    <property type="match status" value="1"/>
</dbReference>
<dbReference type="PANTHER" id="PTHR42714:SF2">
    <property type="entry name" value="TRNA MODIFICATION GTPASE GTPBP3, MITOCHONDRIAL"/>
    <property type="match status" value="1"/>
</dbReference>
<dbReference type="Pfam" id="PF01926">
    <property type="entry name" value="MMR_HSR1"/>
    <property type="match status" value="1"/>
</dbReference>
<dbReference type="Pfam" id="PF12631">
    <property type="entry name" value="MnmE_helical"/>
    <property type="match status" value="1"/>
</dbReference>
<dbReference type="Pfam" id="PF10396">
    <property type="entry name" value="TrmE_N"/>
    <property type="match status" value="1"/>
</dbReference>
<dbReference type="PRINTS" id="PR00326">
    <property type="entry name" value="GTP1OBG"/>
</dbReference>
<dbReference type="SUPFAM" id="SSF52540">
    <property type="entry name" value="P-loop containing nucleoside triphosphate hydrolases"/>
    <property type="match status" value="1"/>
</dbReference>
<dbReference type="PROSITE" id="PS51709">
    <property type="entry name" value="G_TRME"/>
    <property type="match status" value="1"/>
</dbReference>
<feature type="chain" id="PRO_0000345785" description="tRNA modification GTPase MnmE">
    <location>
        <begin position="1"/>
        <end position="459"/>
    </location>
</feature>
<feature type="domain" description="TrmE-type G">
    <location>
        <begin position="226"/>
        <end position="381"/>
    </location>
</feature>
<feature type="binding site" evidence="1">
    <location>
        <position position="30"/>
    </location>
    <ligand>
        <name>(6S)-5-formyl-5,6,7,8-tetrahydrofolate</name>
        <dbReference type="ChEBI" id="CHEBI:57457"/>
    </ligand>
</feature>
<feature type="binding site" evidence="1">
    <location>
        <position position="93"/>
    </location>
    <ligand>
        <name>(6S)-5-formyl-5,6,7,8-tetrahydrofolate</name>
        <dbReference type="ChEBI" id="CHEBI:57457"/>
    </ligand>
</feature>
<feature type="binding site" evidence="1">
    <location>
        <position position="132"/>
    </location>
    <ligand>
        <name>(6S)-5-formyl-5,6,7,8-tetrahydrofolate</name>
        <dbReference type="ChEBI" id="CHEBI:57457"/>
    </ligand>
</feature>
<feature type="binding site" evidence="1">
    <location>
        <begin position="236"/>
        <end position="241"/>
    </location>
    <ligand>
        <name>GTP</name>
        <dbReference type="ChEBI" id="CHEBI:37565"/>
    </ligand>
</feature>
<feature type="binding site" evidence="1">
    <location>
        <position position="236"/>
    </location>
    <ligand>
        <name>K(+)</name>
        <dbReference type="ChEBI" id="CHEBI:29103"/>
    </ligand>
</feature>
<feature type="binding site" evidence="1">
    <location>
        <position position="240"/>
    </location>
    <ligand>
        <name>Mg(2+)</name>
        <dbReference type="ChEBI" id="CHEBI:18420"/>
    </ligand>
</feature>
<feature type="binding site" evidence="1">
    <location>
        <begin position="255"/>
        <end position="261"/>
    </location>
    <ligand>
        <name>GTP</name>
        <dbReference type="ChEBI" id="CHEBI:37565"/>
    </ligand>
</feature>
<feature type="binding site" evidence="1">
    <location>
        <position position="255"/>
    </location>
    <ligand>
        <name>K(+)</name>
        <dbReference type="ChEBI" id="CHEBI:29103"/>
    </ligand>
</feature>
<feature type="binding site" evidence="1">
    <location>
        <position position="257"/>
    </location>
    <ligand>
        <name>K(+)</name>
        <dbReference type="ChEBI" id="CHEBI:29103"/>
    </ligand>
</feature>
<feature type="binding site" evidence="1">
    <location>
        <position position="260"/>
    </location>
    <ligand>
        <name>K(+)</name>
        <dbReference type="ChEBI" id="CHEBI:29103"/>
    </ligand>
</feature>
<feature type="binding site" evidence="1">
    <location>
        <position position="261"/>
    </location>
    <ligand>
        <name>Mg(2+)</name>
        <dbReference type="ChEBI" id="CHEBI:18420"/>
    </ligand>
</feature>
<feature type="binding site" evidence="1">
    <location>
        <begin position="280"/>
        <end position="283"/>
    </location>
    <ligand>
        <name>GTP</name>
        <dbReference type="ChEBI" id="CHEBI:37565"/>
    </ligand>
</feature>
<feature type="binding site" evidence="1">
    <location>
        <position position="459"/>
    </location>
    <ligand>
        <name>(6S)-5-formyl-5,6,7,8-tetrahydrofolate</name>
        <dbReference type="ChEBI" id="CHEBI:57457"/>
    </ligand>
</feature>
<sequence>MNILRGDNLNRDTIVALSTPPGIGAIAIIRISGNKSLELTEKTIKNKKINIKTLEERRINHGYFYDENGEIIDEIMFVYFKSPRSYTGEDMVEIYCHGGILVTNKIIDTLLKLGARLAENGEFTRRAFLNGKIDLIKAESILQIIEAKSEKSLKLALDNLKGKLSNEIEYLRSSLINVLSKIEVSIDYGDDIDVPKEEILNDLINVQSFLKEKIKHADKGLHISTGVTMAIVGKPNVGKSTLLNRLLVEDRAIVTDIPGTTRDVIKGELKIKGVHFIISDTAGIRMTEDKVEKIGIEKALNEAKKSDVILFLLDATTGFTNEDEYIYNLIKDCNFIPVWNKIDIAEKVDKDIVFLRNSVVISAETGRGMRELEEKILESVKVLVEDGELSHVTSKRQLEYLKRVEYNIIKAINSLKKNMPLDIISIDIRNGLEQLDELMGRNFTEDLLDNIFSNFCVGK</sequence>
<proteinExistence type="inferred from homology"/>
<keyword id="KW-0963">Cytoplasm</keyword>
<keyword id="KW-0342">GTP-binding</keyword>
<keyword id="KW-0378">Hydrolase</keyword>
<keyword id="KW-0460">Magnesium</keyword>
<keyword id="KW-0479">Metal-binding</keyword>
<keyword id="KW-0547">Nucleotide-binding</keyword>
<keyword id="KW-0630">Potassium</keyword>
<keyword id="KW-1185">Reference proteome</keyword>
<keyword id="KW-0819">tRNA processing</keyword>
<gene>
    <name evidence="1" type="primary">mnmE</name>
    <name evidence="1" type="synonym">trmE</name>
    <name type="ordered locus">Fnod_0375</name>
</gene>